<accession>P99150</accession>
<accession>Q99SX5</accession>
<comment type="function">
    <text evidence="1">Catalyzes the ATP-dependent amidation of deamido-NAD to form NAD. Uses ammonia as a nitrogen source.</text>
</comment>
<comment type="catalytic activity">
    <reaction evidence="1">
        <text>deamido-NAD(+) + NH4(+) + ATP = AMP + diphosphate + NAD(+) + H(+)</text>
        <dbReference type="Rhea" id="RHEA:21188"/>
        <dbReference type="ChEBI" id="CHEBI:15378"/>
        <dbReference type="ChEBI" id="CHEBI:28938"/>
        <dbReference type="ChEBI" id="CHEBI:30616"/>
        <dbReference type="ChEBI" id="CHEBI:33019"/>
        <dbReference type="ChEBI" id="CHEBI:57540"/>
        <dbReference type="ChEBI" id="CHEBI:58437"/>
        <dbReference type="ChEBI" id="CHEBI:456215"/>
        <dbReference type="EC" id="6.3.1.5"/>
    </reaction>
</comment>
<comment type="pathway">
    <text evidence="1">Cofactor biosynthesis; NAD(+) biosynthesis; NAD(+) from deamido-NAD(+) (ammonia route): step 1/1.</text>
</comment>
<comment type="subunit">
    <text evidence="1">Homodimer.</text>
</comment>
<comment type="similarity">
    <text evidence="1">Belongs to the NAD synthetase family.</text>
</comment>
<feature type="chain" id="PRO_0000152196" description="NH(3)-dependent NAD(+) synthetase">
    <location>
        <begin position="1"/>
        <end position="273"/>
    </location>
</feature>
<feature type="binding site" evidence="1">
    <location>
        <begin position="47"/>
        <end position="54"/>
    </location>
    <ligand>
        <name>ATP</name>
        <dbReference type="ChEBI" id="CHEBI:30616"/>
    </ligand>
</feature>
<feature type="binding site" evidence="1">
    <location>
        <position position="53"/>
    </location>
    <ligand>
        <name>Mg(2+)</name>
        <dbReference type="ChEBI" id="CHEBI:18420"/>
    </ligand>
</feature>
<feature type="binding site" evidence="1">
    <location>
        <position position="139"/>
    </location>
    <ligand>
        <name>deamido-NAD(+)</name>
        <dbReference type="ChEBI" id="CHEBI:58437"/>
    </ligand>
</feature>
<feature type="binding site" evidence="1">
    <location>
        <position position="159"/>
    </location>
    <ligand>
        <name>ATP</name>
        <dbReference type="ChEBI" id="CHEBI:30616"/>
    </ligand>
</feature>
<feature type="binding site" evidence="1">
    <location>
        <position position="164"/>
    </location>
    <ligand>
        <name>Mg(2+)</name>
        <dbReference type="ChEBI" id="CHEBI:18420"/>
    </ligand>
</feature>
<feature type="binding site" evidence="1">
    <location>
        <position position="172"/>
    </location>
    <ligand>
        <name>deamido-NAD(+)</name>
        <dbReference type="ChEBI" id="CHEBI:58437"/>
    </ligand>
</feature>
<feature type="binding site" evidence="1">
    <location>
        <position position="179"/>
    </location>
    <ligand>
        <name>deamido-NAD(+)</name>
        <dbReference type="ChEBI" id="CHEBI:58437"/>
    </ligand>
</feature>
<feature type="binding site" evidence="1">
    <location>
        <position position="188"/>
    </location>
    <ligand>
        <name>ATP</name>
        <dbReference type="ChEBI" id="CHEBI:30616"/>
    </ligand>
</feature>
<feature type="binding site" evidence="1">
    <location>
        <position position="210"/>
    </location>
    <ligand>
        <name>ATP</name>
        <dbReference type="ChEBI" id="CHEBI:30616"/>
    </ligand>
</feature>
<feature type="binding site" evidence="1">
    <location>
        <begin position="259"/>
        <end position="260"/>
    </location>
    <ligand>
        <name>deamido-NAD(+)</name>
        <dbReference type="ChEBI" id="CHEBI:58437"/>
    </ligand>
</feature>
<dbReference type="EC" id="6.3.1.5" evidence="1"/>
<dbReference type="EMBL" id="BA000018">
    <property type="protein sequence ID" value="BAB42998.1"/>
    <property type="molecule type" value="Genomic_DNA"/>
</dbReference>
<dbReference type="PIR" id="G89979">
    <property type="entry name" value="G89979"/>
</dbReference>
<dbReference type="RefSeq" id="WP_000040866.1">
    <property type="nucleotide sequence ID" value="NC_002745.2"/>
</dbReference>
<dbReference type="SMR" id="P99150"/>
<dbReference type="EnsemblBacteria" id="BAB42998">
    <property type="protein sequence ID" value="BAB42998"/>
    <property type="gene ID" value="BAB42998"/>
</dbReference>
<dbReference type="KEGG" id="sau:SA1728"/>
<dbReference type="HOGENOM" id="CLU_059327_3_0_9"/>
<dbReference type="UniPathway" id="UPA00253">
    <property type="reaction ID" value="UER00333"/>
</dbReference>
<dbReference type="GO" id="GO:0005737">
    <property type="term" value="C:cytoplasm"/>
    <property type="evidence" value="ECO:0007669"/>
    <property type="project" value="InterPro"/>
</dbReference>
<dbReference type="GO" id="GO:0005524">
    <property type="term" value="F:ATP binding"/>
    <property type="evidence" value="ECO:0007669"/>
    <property type="project" value="UniProtKB-UniRule"/>
</dbReference>
<dbReference type="GO" id="GO:0004359">
    <property type="term" value="F:glutaminase activity"/>
    <property type="evidence" value="ECO:0007669"/>
    <property type="project" value="InterPro"/>
</dbReference>
<dbReference type="GO" id="GO:0046872">
    <property type="term" value="F:metal ion binding"/>
    <property type="evidence" value="ECO:0007669"/>
    <property type="project" value="UniProtKB-KW"/>
</dbReference>
<dbReference type="GO" id="GO:0003952">
    <property type="term" value="F:NAD+ synthase (glutamine-hydrolyzing) activity"/>
    <property type="evidence" value="ECO:0007669"/>
    <property type="project" value="InterPro"/>
</dbReference>
<dbReference type="GO" id="GO:0008795">
    <property type="term" value="F:NAD+ synthase activity"/>
    <property type="evidence" value="ECO:0007669"/>
    <property type="project" value="UniProtKB-UniRule"/>
</dbReference>
<dbReference type="GO" id="GO:0009435">
    <property type="term" value="P:NAD biosynthetic process"/>
    <property type="evidence" value="ECO:0007669"/>
    <property type="project" value="UniProtKB-UniRule"/>
</dbReference>
<dbReference type="CDD" id="cd00553">
    <property type="entry name" value="NAD_synthase"/>
    <property type="match status" value="1"/>
</dbReference>
<dbReference type="FunFam" id="3.40.50.620:FF:000015">
    <property type="entry name" value="NH(3)-dependent NAD(+) synthetase"/>
    <property type="match status" value="1"/>
</dbReference>
<dbReference type="Gene3D" id="3.40.50.620">
    <property type="entry name" value="HUPs"/>
    <property type="match status" value="1"/>
</dbReference>
<dbReference type="HAMAP" id="MF_00193">
    <property type="entry name" value="NadE_ammonia_dep"/>
    <property type="match status" value="1"/>
</dbReference>
<dbReference type="InterPro" id="IPR022310">
    <property type="entry name" value="NAD/GMP_synthase"/>
</dbReference>
<dbReference type="InterPro" id="IPR003694">
    <property type="entry name" value="NAD_synthase"/>
</dbReference>
<dbReference type="InterPro" id="IPR022926">
    <property type="entry name" value="NH(3)-dep_NAD(+)_synth"/>
</dbReference>
<dbReference type="InterPro" id="IPR014729">
    <property type="entry name" value="Rossmann-like_a/b/a_fold"/>
</dbReference>
<dbReference type="NCBIfam" id="TIGR00552">
    <property type="entry name" value="nadE"/>
    <property type="match status" value="1"/>
</dbReference>
<dbReference type="NCBIfam" id="NF001979">
    <property type="entry name" value="PRK00768.1"/>
    <property type="match status" value="1"/>
</dbReference>
<dbReference type="PANTHER" id="PTHR23090">
    <property type="entry name" value="NH 3 /GLUTAMINE-DEPENDENT NAD + SYNTHETASE"/>
    <property type="match status" value="1"/>
</dbReference>
<dbReference type="PANTHER" id="PTHR23090:SF7">
    <property type="entry name" value="NH(3)-DEPENDENT NAD(+) SYNTHETASE"/>
    <property type="match status" value="1"/>
</dbReference>
<dbReference type="Pfam" id="PF02540">
    <property type="entry name" value="NAD_synthase"/>
    <property type="match status" value="1"/>
</dbReference>
<dbReference type="SUPFAM" id="SSF52402">
    <property type="entry name" value="Adenine nucleotide alpha hydrolases-like"/>
    <property type="match status" value="1"/>
</dbReference>
<reference key="1">
    <citation type="journal article" date="2001" name="Lancet">
        <title>Whole genome sequencing of meticillin-resistant Staphylococcus aureus.</title>
        <authorList>
            <person name="Kuroda M."/>
            <person name="Ohta T."/>
            <person name="Uchiyama I."/>
            <person name="Baba T."/>
            <person name="Yuzawa H."/>
            <person name="Kobayashi I."/>
            <person name="Cui L."/>
            <person name="Oguchi A."/>
            <person name="Aoki K."/>
            <person name="Nagai Y."/>
            <person name="Lian J.-Q."/>
            <person name="Ito T."/>
            <person name="Kanamori M."/>
            <person name="Matsumaru H."/>
            <person name="Maruyama A."/>
            <person name="Murakami H."/>
            <person name="Hosoyama A."/>
            <person name="Mizutani-Ui Y."/>
            <person name="Takahashi N.K."/>
            <person name="Sawano T."/>
            <person name="Inoue R."/>
            <person name="Kaito C."/>
            <person name="Sekimizu K."/>
            <person name="Hirakawa H."/>
            <person name="Kuhara S."/>
            <person name="Goto S."/>
            <person name="Yabuzaki J."/>
            <person name="Kanehisa M."/>
            <person name="Yamashita A."/>
            <person name="Oshima K."/>
            <person name="Furuya K."/>
            <person name="Yoshino C."/>
            <person name="Shiba T."/>
            <person name="Hattori M."/>
            <person name="Ogasawara N."/>
            <person name="Hayashi H."/>
            <person name="Hiramatsu K."/>
        </authorList>
    </citation>
    <scope>NUCLEOTIDE SEQUENCE [LARGE SCALE GENOMIC DNA]</scope>
    <source>
        <strain>N315</strain>
    </source>
</reference>
<reference key="2">
    <citation type="journal article" date="2005" name="J. Microbiol. Methods">
        <title>Correlation of proteomic and transcriptomic profiles of Staphylococcus aureus during the post-exponential phase of growth.</title>
        <authorList>
            <person name="Scherl A."/>
            <person name="Francois P."/>
            <person name="Bento M."/>
            <person name="Deshusses J.M."/>
            <person name="Charbonnier Y."/>
            <person name="Converset V."/>
            <person name="Huyghe A."/>
            <person name="Walter N."/>
            <person name="Hoogland C."/>
            <person name="Appel R.D."/>
            <person name="Sanchez J.-C."/>
            <person name="Zimmermann-Ivol C.G."/>
            <person name="Corthals G.L."/>
            <person name="Hochstrasser D.F."/>
            <person name="Schrenzel J."/>
        </authorList>
    </citation>
    <scope>IDENTIFICATION BY MASS SPECTROMETRY</scope>
    <source>
        <strain>N315</strain>
    </source>
</reference>
<reference key="3">
    <citation type="submission" date="2007-10" db="UniProtKB">
        <title>Shotgun proteomic analysis of total and membrane protein extracts of S. aureus strain N315.</title>
        <authorList>
            <person name="Vaezzadeh A.R."/>
            <person name="Deshusses J."/>
            <person name="Lescuyer P."/>
            <person name="Hochstrasser D.F."/>
        </authorList>
    </citation>
    <scope>IDENTIFICATION BY MASS SPECTROMETRY [LARGE SCALE ANALYSIS]</scope>
    <source>
        <strain>N315</strain>
    </source>
</reference>
<protein>
    <recommendedName>
        <fullName evidence="1">NH(3)-dependent NAD(+) synthetase</fullName>
        <ecNumber evidence="1">6.3.1.5</ecNumber>
    </recommendedName>
</protein>
<keyword id="KW-0067">ATP-binding</keyword>
<keyword id="KW-0436">Ligase</keyword>
<keyword id="KW-0460">Magnesium</keyword>
<keyword id="KW-0479">Metal-binding</keyword>
<keyword id="KW-0520">NAD</keyword>
<keyword id="KW-0547">Nucleotide-binding</keyword>
<sequence>MSKLQDVIVQEMKVKKRIDSAEEIMELKQFIKNYVQSHSFIKSLVLGISGGQDSTLVGKLVQMSVNELREEGIDCTFIAVKLPYGVQKDADEVDQALRFIEPDEIVTVNIKPAVDQSVQSLKEAGIVLTDFQKGNEKARERMKVQFSIASNRQGIVVGTDHSAENITGFYTKYGDGAADIAPIFGLNKRQGRQLLAYLGAPKELYEKTPTADLEDDKPQLPDEDALGVTYEAIDNYLEGKPVTPEEQKVIENHYIRNAHKRELAYTRYTWPKS</sequence>
<name>NADE_STAAN</name>
<gene>
    <name evidence="1" type="primary">nadE</name>
    <name type="ordered locus">SA1728</name>
</gene>
<proteinExistence type="evidence at protein level"/>
<evidence type="ECO:0000255" key="1">
    <source>
        <dbReference type="HAMAP-Rule" id="MF_00193"/>
    </source>
</evidence>
<organism>
    <name type="scientific">Staphylococcus aureus (strain N315)</name>
    <dbReference type="NCBI Taxonomy" id="158879"/>
    <lineage>
        <taxon>Bacteria</taxon>
        <taxon>Bacillati</taxon>
        <taxon>Bacillota</taxon>
        <taxon>Bacilli</taxon>
        <taxon>Bacillales</taxon>
        <taxon>Staphylococcaceae</taxon>
        <taxon>Staphylococcus</taxon>
    </lineage>
</organism>